<dbReference type="EC" id="1.14.14.17" evidence="6 7 8"/>
<dbReference type="EMBL" id="M64994">
    <property type="protein sequence ID" value="AAA34592.1"/>
    <property type="molecule type" value="Genomic_DNA"/>
</dbReference>
<dbReference type="EMBL" id="Z72960">
    <property type="protein sequence ID" value="CAA97201.1"/>
    <property type="molecule type" value="Genomic_DNA"/>
</dbReference>
<dbReference type="EMBL" id="BK006941">
    <property type="protein sequence ID" value="DAA08271.1"/>
    <property type="molecule type" value="Genomic_DNA"/>
</dbReference>
<dbReference type="PIR" id="S64489">
    <property type="entry name" value="S64489"/>
</dbReference>
<dbReference type="RefSeq" id="NP_011691.1">
    <property type="nucleotide sequence ID" value="NM_001181304.1"/>
</dbReference>
<dbReference type="SMR" id="P32476"/>
<dbReference type="BioGRID" id="33428">
    <property type="interactions" value="99"/>
</dbReference>
<dbReference type="DIP" id="DIP-6325N"/>
<dbReference type="FunCoup" id="P32476">
    <property type="interactions" value="237"/>
</dbReference>
<dbReference type="IntAct" id="P32476">
    <property type="interactions" value="31"/>
</dbReference>
<dbReference type="MINT" id="P32476"/>
<dbReference type="STRING" id="4932.YGR175C"/>
<dbReference type="ChEMBL" id="CHEMBL1888"/>
<dbReference type="iPTMnet" id="P32476"/>
<dbReference type="PaxDb" id="4932-YGR175C"/>
<dbReference type="PeptideAtlas" id="P32476"/>
<dbReference type="TopDownProteomics" id="P32476"/>
<dbReference type="EnsemblFungi" id="YGR175C_mRNA">
    <property type="protein sequence ID" value="YGR175C"/>
    <property type="gene ID" value="YGR175C"/>
</dbReference>
<dbReference type="GeneID" id="853086"/>
<dbReference type="KEGG" id="sce:YGR175C"/>
<dbReference type="AGR" id="SGD:S000003407"/>
<dbReference type="SGD" id="S000003407">
    <property type="gene designation" value="ERG1"/>
</dbReference>
<dbReference type="VEuPathDB" id="FungiDB:YGR175C"/>
<dbReference type="eggNOG" id="KOG1298">
    <property type="taxonomic scope" value="Eukaryota"/>
</dbReference>
<dbReference type="GeneTree" id="ENSGT00390000011759"/>
<dbReference type="HOGENOM" id="CLU_026390_0_0_1"/>
<dbReference type="InParanoid" id="P32476"/>
<dbReference type="OMA" id="AKRTFYW"/>
<dbReference type="OrthoDB" id="1678617at2759"/>
<dbReference type="BioCyc" id="MetaCyc:YGR175C-MONOMER"/>
<dbReference type="BioCyc" id="YEAST:YGR175C-MONOMER"/>
<dbReference type="Reactome" id="R-SCE-191273">
    <property type="pathway name" value="Cholesterol biosynthesis"/>
</dbReference>
<dbReference type="SABIO-RK" id="P32476"/>
<dbReference type="UniPathway" id="UPA00767">
    <property type="reaction ID" value="UER00752"/>
</dbReference>
<dbReference type="BioGRID-ORCS" id="853086">
    <property type="hits" value="1 hit in 10 CRISPR screens"/>
</dbReference>
<dbReference type="PRO" id="PR:P32476"/>
<dbReference type="Proteomes" id="UP000002311">
    <property type="component" value="Chromosome VII"/>
</dbReference>
<dbReference type="RNAct" id="P32476">
    <property type="molecule type" value="protein"/>
</dbReference>
<dbReference type="GO" id="GO:0005783">
    <property type="term" value="C:endoplasmic reticulum"/>
    <property type="evidence" value="ECO:0000314"/>
    <property type="project" value="SGD"/>
</dbReference>
<dbReference type="GO" id="GO:0005789">
    <property type="term" value="C:endoplasmic reticulum membrane"/>
    <property type="evidence" value="ECO:0007669"/>
    <property type="project" value="UniProtKB-SubCell"/>
</dbReference>
<dbReference type="GO" id="GO:0005811">
    <property type="term" value="C:lipid droplet"/>
    <property type="evidence" value="ECO:0000314"/>
    <property type="project" value="SGD"/>
</dbReference>
<dbReference type="GO" id="GO:0050660">
    <property type="term" value="F:flavin adenine dinucleotide binding"/>
    <property type="evidence" value="ECO:0007669"/>
    <property type="project" value="InterPro"/>
</dbReference>
<dbReference type="GO" id="GO:0004506">
    <property type="term" value="F:squalene monooxygenase activity"/>
    <property type="evidence" value="ECO:0000314"/>
    <property type="project" value="UniProt"/>
</dbReference>
<dbReference type="GO" id="GO:0006696">
    <property type="term" value="P:ergosterol biosynthetic process"/>
    <property type="evidence" value="ECO:0000314"/>
    <property type="project" value="UniProt"/>
</dbReference>
<dbReference type="FunFam" id="3.50.50.60:FF:000325">
    <property type="entry name" value="Squalene monooxygenase"/>
    <property type="match status" value="1"/>
</dbReference>
<dbReference type="FunFam" id="3.50.50.60:FF:000326">
    <property type="entry name" value="Squalene monooxygenase"/>
    <property type="match status" value="1"/>
</dbReference>
<dbReference type="Gene3D" id="3.50.50.60">
    <property type="entry name" value="FAD/NAD(P)-binding domain"/>
    <property type="match status" value="1"/>
</dbReference>
<dbReference type="InterPro" id="IPR036188">
    <property type="entry name" value="FAD/NAD-bd_sf"/>
</dbReference>
<dbReference type="InterPro" id="IPR013698">
    <property type="entry name" value="Squalene_epoxidase"/>
</dbReference>
<dbReference type="InterPro" id="IPR040125">
    <property type="entry name" value="Squalene_monox"/>
</dbReference>
<dbReference type="PANTHER" id="PTHR10835">
    <property type="entry name" value="SQUALENE MONOOXYGENASE"/>
    <property type="match status" value="1"/>
</dbReference>
<dbReference type="PANTHER" id="PTHR10835:SF0">
    <property type="entry name" value="SQUALENE MONOOXYGENASE"/>
    <property type="match status" value="1"/>
</dbReference>
<dbReference type="Pfam" id="PF08491">
    <property type="entry name" value="SE"/>
    <property type="match status" value="1"/>
</dbReference>
<dbReference type="PRINTS" id="PR00420">
    <property type="entry name" value="RNGMNOXGNASE"/>
</dbReference>
<dbReference type="SUPFAM" id="SSF51905">
    <property type="entry name" value="FAD/NAD(P)-binding domain"/>
    <property type="match status" value="1"/>
</dbReference>
<proteinExistence type="evidence at protein level"/>
<gene>
    <name evidence="9" type="primary">ERG1</name>
    <name type="ordered locus">YGR175C</name>
</gene>
<sequence>MSAVNVAPELINADNTITYDAIVIGAGVIGPCVATGLARKGKKVLIVERDWAMPDRIVGELMQPGGVRALRSLGMIQSINNIEAYPVTGYTVFFNGEQVDIPYPYKADIPKVEKLKDLVKDGNDKVLEDSTIHIKDYEDDERERGVAFVHGRFLNNLRNITAQEPNVTRVQGNCIEILKDEKNEVVGAKVDIDGRGKVEFKAHLTFICDGIFSRFRKELHPDHVPTVGSSFVGMSLFNAKNPAPMHGHVILGSDHMPILVYQISPEETRILCAYNSPKVPADIKSWMIKDVQPFIPKSLRPSFDEAVSQGKFRAMPNSYLPARQNDVTGMCVIGDALNMRHPLTGGGMTVGLHDVVLLIKKIGDLDFSDREKVLDELLDYHFERKSYDSVINVLSVALYSLFAADSDNLKALQKGCFKYFQRGGDCVNKPVEFLSGVLPKPLQLTRVFFAVAFYTIYLNMEERGFLGLPMALLEGIMILITAIRVFTPFLFGELIG</sequence>
<protein>
    <recommendedName>
        <fullName evidence="9">Squalene epoxidase ERG1</fullName>
        <shortName evidence="11">SE</shortName>
        <ecNumber evidence="6 7 8">1.14.14.17</ecNumber>
    </recommendedName>
    <alternativeName>
        <fullName evidence="9">Ergosterol biosynthetic protein 1</fullName>
    </alternativeName>
    <alternativeName>
        <fullName evidence="12">Squalene monooxygenase ERG1</fullName>
    </alternativeName>
</protein>
<evidence type="ECO:0000250" key="1">
    <source>
        <dbReference type="UniProtKB" id="Q14534"/>
    </source>
</evidence>
<evidence type="ECO:0000255" key="2"/>
<evidence type="ECO:0000269" key="3">
    <source>
    </source>
</evidence>
<evidence type="ECO:0000269" key="4">
    <source>
    </source>
</evidence>
<evidence type="ECO:0000269" key="5">
    <source>
    </source>
</evidence>
<evidence type="ECO:0000269" key="6">
    <source>
    </source>
</evidence>
<evidence type="ECO:0000269" key="7">
    <source>
    </source>
</evidence>
<evidence type="ECO:0000269" key="8">
    <source>
    </source>
</evidence>
<evidence type="ECO:0000303" key="9">
    <source>
    </source>
</evidence>
<evidence type="ECO:0000303" key="10">
    <source>
    </source>
</evidence>
<evidence type="ECO:0000303" key="11">
    <source>
    </source>
</evidence>
<evidence type="ECO:0000305" key="12"/>
<evidence type="ECO:0007744" key="13">
    <source>
    </source>
</evidence>
<organism>
    <name type="scientific">Saccharomyces cerevisiae (strain ATCC 204508 / S288c)</name>
    <name type="common">Baker's yeast</name>
    <dbReference type="NCBI Taxonomy" id="559292"/>
    <lineage>
        <taxon>Eukaryota</taxon>
        <taxon>Fungi</taxon>
        <taxon>Dikarya</taxon>
        <taxon>Ascomycota</taxon>
        <taxon>Saccharomycotina</taxon>
        <taxon>Saccharomycetes</taxon>
        <taxon>Saccharomycetales</taxon>
        <taxon>Saccharomycetaceae</taxon>
        <taxon>Saccharomyces</taxon>
    </lineage>
</organism>
<name>ERG1_YEAST</name>
<accession>P32476</accession>
<accession>D6VUW0</accession>
<comment type="function">
    <text evidence="6 7 8 10">Squalene epoxidase; part of the third module of ergosterol biosynthesis pathway that includes the late steps of the pathway (PubMed:1743514, PubMed:8358382, PubMed:9450962). ERG1 catalyzes the epoxidation of squalene into 2,3-epoxysqualene (PubMed:1743514, PubMed:8358382, PubMed:9450962). The third module or late pathway involves the ergosterol synthesis itself through consecutive reactions that mainly occur in the endoplasmic reticulum (ER) membrane. Firstly, the squalene synthase ERG9 catalyzes the condensation of 2 farnesyl pyrophosphate moieties to form squalene, which is the precursor of all steroids. Squalene synthase is crucial for balancing the incorporation of farnesyl diphosphate (FPP) into sterol and nonsterol isoprene synthesis. Secondly, the squalene epoxidase ERG1 catalyzes the stereospecific oxidation of squalene to (S)-2,3-epoxysqualene, which is considered to be a rate-limiting enzyme in steroid biosynthesis. Then, the lanosterol synthase ERG7 catalyzes the cyclization of (S)-2,3 oxidosqualene to lanosterol, a reaction that forms the sterol core. In the next steps, lanosterol is transformed to zymosterol through a complex process involving various demethylation, reduction and desaturation reactions. The lanosterol 14-alpha-demethylase ERG11 (also known as CYP51) catalyzes C14-demethylation of lanosterol to produce 4,4'-dimethyl cholesta-8,14,24-triene-3-beta-ol, which is critical for ergosterol biosynthesis. The C-14 reductase ERG24 reduces the C14=C15 double bond of 4,4-dimethyl-cholesta-8,14,24-trienol to produce 4,4-dimethyl-cholesta-8,24-dienol. 4,4-dimethyl-cholesta-8,24-dienol is substrate of the C-4 demethylation complex ERG25-ERG26-ERG27 in which ERG25 catalyzes the three-step monooxygenation required for the demethylation of 4,4-dimethyl and 4alpha-methylsterols, ERG26 catalyzes the oxidative decarboxylation that results in a reduction of the 3-beta-hydroxy group at the C-3 carbon to an oxo group, and ERG27 is responsible for the reduction of the keto group on the C-3. ERG28 has a role as a scaffold to help anchor ERG25, ERG26 and ERG27 to the endoplasmic reticulum and ERG29 regulates the activity of the iron-containing C4-methylsterol oxidase ERG25. Then, the sterol 24-C-methyltransferase ERG6 catalyzes the methyl transfer from S-adenosyl-methionine to the C-24 of zymosterol to form fecosterol. The C-8 sterol isomerase ERG2 catalyzes the reaction which results in unsaturation at C-7 in the B ring of sterols and thus converts fecosterol to episterol. The sterol-C5-desaturase ERG3 then catalyzes the introduction of a C-5 double bond in the B ring to produce 5-dehydroepisterol. The C-22 sterol desaturase ERG5 further converts 5-dehydroepisterol into ergosta-5,7,22,24(28)-tetraen-3beta-ol by forming the C-22(23) double bond in the sterol side chain. Finally, ergosta-5,7,22,24(28)-tetraen-3beta-ol is substrate of the C-24(28) sterol reductase ERG4 to produce ergosterol (PubMed:32679672).</text>
</comment>
<comment type="catalytic activity">
    <reaction evidence="6 7 8">
        <text>squalene + reduced [NADPH--hemoprotein reductase] + O2 = (S)-2,3-epoxysqualene + oxidized [NADPH--hemoprotein reductase] + H2O + H(+)</text>
        <dbReference type="Rhea" id="RHEA:25282"/>
        <dbReference type="Rhea" id="RHEA-COMP:11964"/>
        <dbReference type="Rhea" id="RHEA-COMP:11965"/>
        <dbReference type="ChEBI" id="CHEBI:15377"/>
        <dbReference type="ChEBI" id="CHEBI:15378"/>
        <dbReference type="ChEBI" id="CHEBI:15379"/>
        <dbReference type="ChEBI" id="CHEBI:15440"/>
        <dbReference type="ChEBI" id="CHEBI:15441"/>
        <dbReference type="ChEBI" id="CHEBI:57618"/>
        <dbReference type="ChEBI" id="CHEBI:58210"/>
        <dbReference type="EC" id="1.14.14.17"/>
    </reaction>
</comment>
<comment type="cofactor">
    <cofactor evidence="1">
        <name>FAD</name>
        <dbReference type="ChEBI" id="CHEBI:57692"/>
    </cofactor>
</comment>
<comment type="activity regulation">
    <text evidence="12">Inhibited by the allylamine antimycotic drugs.</text>
</comment>
<comment type="biophysicochemical properties">
    <kinetics>
        <KM evidence="7">13.5 uM for squalene</KM>
    </kinetics>
    <phDependence>
        <text evidence="7">Optimum pH is 7.5.</text>
    </phDependence>
</comment>
<comment type="pathway">
    <text evidence="6 7 8">Terpene metabolism; lanosterol biosynthesis; lanosterol from farnesyl diphosphate: step 2/3.</text>
</comment>
<comment type="subunit">
    <text evidence="5">Interacts with ERG28.</text>
</comment>
<comment type="subcellular location">
    <subcellularLocation>
        <location evidence="8">Microsome membrane</location>
        <topology evidence="12">Multi-pass membrane protein</topology>
    </subcellularLocation>
    <subcellularLocation>
        <location evidence="8">Endoplasmic reticulum membrane</location>
        <topology evidence="12">Multi-pass membrane protein</topology>
    </subcellularLocation>
    <subcellularLocation>
        <location evidence="8">Lipid droplet</location>
    </subcellularLocation>
</comment>
<comment type="miscellaneous">
    <text evidence="4">Present with 65400 molecules/cell in log phase SD medium.</text>
</comment>
<comment type="similarity">
    <text evidence="12">Belongs to the squalene monooxygenase family.</text>
</comment>
<reference key="1">
    <citation type="journal article" date="1991" name="Gene">
        <title>The gene encoding squalene epoxidase from Saccharomyces cerevisiae: cloning and characterization.</title>
        <authorList>
            <person name="Jandrositz A."/>
            <person name="Turnowsky F."/>
            <person name="Hoegenauer G."/>
        </authorList>
    </citation>
    <scope>NUCLEOTIDE SEQUENCE [GENOMIC DNA]</scope>
    <scope>FUNCTION</scope>
    <scope>CATALYTIC ACTIVITY</scope>
    <scope>PATHWAY</scope>
    <source>
        <strain>A2-M8</strain>
    </source>
</reference>
<reference key="2">
    <citation type="journal article" date="1997" name="Nature">
        <title>The nucleotide sequence of Saccharomyces cerevisiae chromosome VII.</title>
        <authorList>
            <person name="Tettelin H."/>
            <person name="Agostoni-Carbone M.L."/>
            <person name="Albermann K."/>
            <person name="Albers M."/>
            <person name="Arroyo J."/>
            <person name="Backes U."/>
            <person name="Barreiros T."/>
            <person name="Bertani I."/>
            <person name="Bjourson A.J."/>
            <person name="Brueckner M."/>
            <person name="Bruschi C.V."/>
            <person name="Carignani G."/>
            <person name="Castagnoli L."/>
            <person name="Cerdan E."/>
            <person name="Clemente M.L."/>
            <person name="Coblenz A."/>
            <person name="Coglievina M."/>
            <person name="Coissac E."/>
            <person name="Defoor E."/>
            <person name="Del Bino S."/>
            <person name="Delius H."/>
            <person name="Delneri D."/>
            <person name="de Wergifosse P."/>
            <person name="Dujon B."/>
            <person name="Durand P."/>
            <person name="Entian K.-D."/>
            <person name="Eraso P."/>
            <person name="Escribano V."/>
            <person name="Fabiani L."/>
            <person name="Fartmann B."/>
            <person name="Feroli F."/>
            <person name="Feuermann M."/>
            <person name="Frontali L."/>
            <person name="Garcia-Gonzalez M."/>
            <person name="Garcia-Saez M.I."/>
            <person name="Goffeau A."/>
            <person name="Guerreiro P."/>
            <person name="Hani J."/>
            <person name="Hansen M."/>
            <person name="Hebling U."/>
            <person name="Hernandez K."/>
            <person name="Heumann K."/>
            <person name="Hilger F."/>
            <person name="Hofmann B."/>
            <person name="Indge K.J."/>
            <person name="James C.M."/>
            <person name="Klima R."/>
            <person name="Koetter P."/>
            <person name="Kramer B."/>
            <person name="Kramer W."/>
            <person name="Lauquin G."/>
            <person name="Leuther H."/>
            <person name="Louis E.J."/>
            <person name="Maillier E."/>
            <person name="Marconi A."/>
            <person name="Martegani E."/>
            <person name="Mazon M.J."/>
            <person name="Mazzoni C."/>
            <person name="McReynolds A.D.K."/>
            <person name="Melchioretto P."/>
            <person name="Mewes H.-W."/>
            <person name="Minenkova O."/>
            <person name="Mueller-Auer S."/>
            <person name="Nawrocki A."/>
            <person name="Netter P."/>
            <person name="Neu R."/>
            <person name="Nombela C."/>
            <person name="Oliver S.G."/>
            <person name="Panzeri L."/>
            <person name="Paoluzi S."/>
            <person name="Plevani P."/>
            <person name="Portetelle D."/>
            <person name="Portillo F."/>
            <person name="Potier S."/>
            <person name="Purnelle B."/>
            <person name="Rieger M."/>
            <person name="Riles L."/>
            <person name="Rinaldi T."/>
            <person name="Robben J."/>
            <person name="Rodrigues-Pousada C."/>
            <person name="Rodriguez-Belmonte E."/>
            <person name="Rodriguez-Torres A.M."/>
            <person name="Rose M."/>
            <person name="Ruzzi M."/>
            <person name="Saliola M."/>
            <person name="Sanchez-Perez M."/>
            <person name="Schaefer B."/>
            <person name="Schaefer M."/>
            <person name="Scharfe M."/>
            <person name="Schmidheini T."/>
            <person name="Schreer A."/>
            <person name="Skala J."/>
            <person name="Souciet J.-L."/>
            <person name="Steensma H.Y."/>
            <person name="Talla E."/>
            <person name="Thierry A."/>
            <person name="Vandenbol M."/>
            <person name="van der Aart Q.J.M."/>
            <person name="Van Dyck L."/>
            <person name="Vanoni M."/>
            <person name="Verhasselt P."/>
            <person name="Voet M."/>
            <person name="Volckaert G."/>
            <person name="Wambutt R."/>
            <person name="Watson M.D."/>
            <person name="Weber N."/>
            <person name="Wedler E."/>
            <person name="Wedler H."/>
            <person name="Wipfli P."/>
            <person name="Wolf K."/>
            <person name="Wright L.F."/>
            <person name="Zaccaria P."/>
            <person name="Zimmermann M."/>
            <person name="Zollner A."/>
            <person name="Kleine K."/>
        </authorList>
    </citation>
    <scope>NUCLEOTIDE SEQUENCE [LARGE SCALE GENOMIC DNA]</scope>
    <source>
        <strain>ATCC 204508 / S288c</strain>
    </source>
</reference>
<reference key="3">
    <citation type="journal article" date="2014" name="G3 (Bethesda)">
        <title>The reference genome sequence of Saccharomyces cerevisiae: Then and now.</title>
        <authorList>
            <person name="Engel S.R."/>
            <person name="Dietrich F.S."/>
            <person name="Fisk D.G."/>
            <person name="Binkley G."/>
            <person name="Balakrishnan R."/>
            <person name="Costanzo M.C."/>
            <person name="Dwight S.S."/>
            <person name="Hitz B.C."/>
            <person name="Karra K."/>
            <person name="Nash R.S."/>
            <person name="Weng S."/>
            <person name="Wong E.D."/>
            <person name="Lloyd P."/>
            <person name="Skrzypek M.S."/>
            <person name="Miyasato S.R."/>
            <person name="Simison M."/>
            <person name="Cherry J.M."/>
        </authorList>
    </citation>
    <scope>GENOME REANNOTATION</scope>
    <source>
        <strain>ATCC 204508 / S288c</strain>
    </source>
</reference>
<reference key="4">
    <citation type="journal article" date="1993" name="Biol. Pharm. Bull.">
        <title>Enzymatic properties of squalene epoxidase from Saccharomyces cerevisiae.</title>
        <authorList>
            <person name="Satoh T."/>
            <person name="Horie M."/>
            <person name="Watanabe H."/>
            <person name="Tsuchiya Y."/>
            <person name="Kamei T."/>
        </authorList>
    </citation>
    <scope>FUNCTION</scope>
    <scope>CATALYTIC ACTIVITY</scope>
    <scope>BIOPHYSICOCHEMICAL PROPERTIES</scope>
    <scope>PATHWAY</scope>
</reference>
<reference key="5">
    <citation type="journal article" date="1998" name="Mol. Biol. Cell">
        <title>Dual localization of squalene epoxidase, Erg1p, in yeast reflects a relationship between the endoplasmic reticulum and lipid particles.</title>
        <authorList>
            <person name="Leber R."/>
            <person name="Landl K."/>
            <person name="Zinser E."/>
            <person name="Ahorn H."/>
            <person name="Spoek A."/>
            <person name="Kohlwein S.D."/>
            <person name="Turnowsky F."/>
            <person name="Daum G."/>
        </authorList>
    </citation>
    <scope>PARTIAL PROTEIN SEQUENCE</scope>
    <scope>FUNCTION</scope>
    <scope>CATALYTIC ACTIVITY</scope>
    <scope>PATHWAY</scope>
    <scope>SUBCELLULAR LOCATION</scope>
</reference>
<reference key="6">
    <citation type="journal article" date="2003" name="Nature">
        <title>Global analysis of protein expression in yeast.</title>
        <authorList>
            <person name="Ghaemmaghami S."/>
            <person name="Huh W.-K."/>
            <person name="Bower K."/>
            <person name="Howson R.W."/>
            <person name="Belle A."/>
            <person name="Dephoure N."/>
            <person name="O'Shea E.K."/>
            <person name="Weissman J.S."/>
        </authorList>
    </citation>
    <scope>LEVEL OF PROTEIN EXPRESSION [LARGE SCALE ANALYSIS]</scope>
</reference>
<reference key="7">
    <citation type="journal article" date="2003" name="Nat. Biotechnol.">
        <title>A proteomics approach to understanding protein ubiquitination.</title>
        <authorList>
            <person name="Peng J."/>
            <person name="Schwartz D."/>
            <person name="Elias J.E."/>
            <person name="Thoreen C.C."/>
            <person name="Cheng D."/>
            <person name="Marsischky G."/>
            <person name="Roelofs J."/>
            <person name="Finley D."/>
            <person name="Gygi S.P."/>
        </authorList>
    </citation>
    <scope>UBIQUITINATION [LARGE SCALE ANALYSIS] AT LYS-311</scope>
    <scope>IDENTIFICATION BY MASS SPECTROMETRY</scope>
    <source>
        <strain>SUB592</strain>
    </source>
</reference>
<reference key="8">
    <citation type="journal article" date="2003" name="Proc. Natl. Acad. Sci. U.S.A.">
        <title>A subset of membrane-associated proteins is ubiquitinated in response to mutations in the endoplasmic reticulum degradation machinery.</title>
        <authorList>
            <person name="Hitchcock A.L."/>
            <person name="Auld K."/>
            <person name="Gygi S.P."/>
            <person name="Silver P.A."/>
        </authorList>
    </citation>
    <scope>UBIQUITINATION [LARGE SCALE ANALYSIS] AT LYS-284</scope>
    <scope>IDENTIFICATION BY MASS SPECTROMETRY</scope>
</reference>
<reference key="9">
    <citation type="journal article" date="2005" name="J. Lipid Res.">
        <title>Erg28p is a key protein in the yeast sterol biosynthetic enzyme complex.</title>
        <authorList>
            <person name="Mo C."/>
            <person name="Bard M."/>
        </authorList>
    </citation>
    <scope>FUNCTION</scope>
    <scope>INTERACTION WITH ERG28</scope>
</reference>
<reference key="10">
    <citation type="journal article" date="2006" name="Proc. Natl. Acad. Sci. U.S.A.">
        <title>A global topology map of the Saccharomyces cerevisiae membrane proteome.</title>
        <authorList>
            <person name="Kim H."/>
            <person name="Melen K."/>
            <person name="Oesterberg M."/>
            <person name="von Heijne G."/>
        </authorList>
    </citation>
    <scope>TOPOLOGY [LARGE SCALE ANALYSIS]</scope>
    <source>
        <strain>ATCC 208353 / W303-1A</strain>
    </source>
</reference>
<reference key="11">
    <citation type="journal article" date="2012" name="Proteomics">
        <title>Sites of ubiquitin attachment in Saccharomyces cerevisiae.</title>
        <authorList>
            <person name="Starita L.M."/>
            <person name="Lo R.S."/>
            <person name="Eng J.K."/>
            <person name="von Haller P.D."/>
            <person name="Fields S."/>
        </authorList>
    </citation>
    <scope>UBIQUITINATION [LARGE SCALE ANALYSIS] AT LYS-289 AND LYS-311</scope>
    <scope>IDENTIFICATION BY MASS SPECTROMETRY [LARGE SCALE ANALYSIS]</scope>
</reference>
<reference key="12">
    <citation type="journal article" date="2020" name="Genes (Basel)">
        <title>Regulation of ergosterol biosynthesis in Saccharomyces cerevisiae.</title>
        <authorList>
            <person name="Jorda T."/>
            <person name="Puig S."/>
        </authorList>
    </citation>
    <scope>REVIEW ON ERGOSTEROL BIOSYNTHESIS</scope>
</reference>
<keyword id="KW-0903">Direct protein sequencing</keyword>
<keyword id="KW-0256">Endoplasmic reticulum</keyword>
<keyword id="KW-0274">FAD</keyword>
<keyword id="KW-0285">Flavoprotein</keyword>
<keyword id="KW-1017">Isopeptide bond</keyword>
<keyword id="KW-0444">Lipid biosynthesis</keyword>
<keyword id="KW-0551">Lipid droplet</keyword>
<keyword id="KW-0443">Lipid metabolism</keyword>
<keyword id="KW-0472">Membrane</keyword>
<keyword id="KW-0492">Microsome</keyword>
<keyword id="KW-0560">Oxidoreductase</keyword>
<keyword id="KW-1185">Reference proteome</keyword>
<keyword id="KW-0752">Steroid biosynthesis</keyword>
<keyword id="KW-0753">Steroid metabolism</keyword>
<keyword id="KW-0756">Sterol biosynthesis</keyword>
<keyword id="KW-1207">Sterol metabolism</keyword>
<keyword id="KW-0812">Transmembrane</keyword>
<keyword id="KW-1133">Transmembrane helix</keyword>
<keyword id="KW-0832">Ubl conjugation</keyword>
<feature type="chain" id="PRO_0000209851" description="Squalene epoxidase ERG1">
    <location>
        <begin position="1"/>
        <end position="496"/>
    </location>
</feature>
<feature type="topological domain" description="Cytoplasmic" evidence="2">
    <location>
        <begin position="1"/>
        <end position="16"/>
    </location>
</feature>
<feature type="transmembrane region" description="Helical" evidence="2">
    <location>
        <begin position="17"/>
        <end position="37"/>
    </location>
</feature>
<feature type="topological domain" description="Lumenal" evidence="2">
    <location>
        <begin position="38"/>
        <end position="474"/>
    </location>
</feature>
<feature type="transmembrane region" description="Helical" evidence="2">
    <location>
        <begin position="475"/>
        <end position="495"/>
    </location>
</feature>
<feature type="topological domain" description="Cytoplasmic" evidence="2">
    <location>
        <position position="496"/>
    </location>
</feature>
<feature type="binding site" evidence="1">
    <location>
        <begin position="28"/>
        <end position="29"/>
    </location>
    <ligand>
        <name>FAD</name>
        <dbReference type="ChEBI" id="CHEBI:57692"/>
    </ligand>
</feature>
<feature type="binding site" evidence="1">
    <location>
        <begin position="48"/>
        <end position="49"/>
    </location>
    <ligand>
        <name>FAD</name>
        <dbReference type="ChEBI" id="CHEBI:57692"/>
    </ligand>
</feature>
<feature type="binding site" evidence="1">
    <location>
        <position position="56"/>
    </location>
    <ligand>
        <name>FAD</name>
        <dbReference type="ChEBI" id="CHEBI:57692"/>
    </ligand>
</feature>
<feature type="binding site" evidence="1">
    <location>
        <position position="158"/>
    </location>
    <ligand>
        <name>FAD</name>
        <dbReference type="ChEBI" id="CHEBI:57692"/>
    </ligand>
</feature>
<feature type="binding site" evidence="1">
    <location>
        <position position="335"/>
    </location>
    <ligand>
        <name>FAD</name>
        <dbReference type="ChEBI" id="CHEBI:57692"/>
    </ligand>
</feature>
<feature type="binding site" evidence="1">
    <location>
        <position position="348"/>
    </location>
    <ligand>
        <name>FAD</name>
        <dbReference type="ChEBI" id="CHEBI:57692"/>
    </ligand>
</feature>
<feature type="site" description="Important for enzyme activity" evidence="1">
    <location>
        <position position="90"/>
    </location>
</feature>
<feature type="cross-link" description="Glycyl lysine isopeptide (Lys-Gly) (interchain with G-Cter in ubiquitin)" evidence="3">
    <location>
        <position position="284"/>
    </location>
</feature>
<feature type="cross-link" description="Glycyl lysine isopeptide (Lys-Gly) (interchain with G-Cter in ubiquitin)" evidence="13">
    <location>
        <position position="289"/>
    </location>
</feature>
<feature type="cross-link" description="Glycyl lysine isopeptide (Lys-Gly) (interchain with G-Cter in ubiquitin)" evidence="13">
    <location>
        <position position="311"/>
    </location>
</feature>
<feature type="sequence variant" description="In strain: A2-M8; confers resistance to the allylamine antifungal terbinafine.">
    <original>L</original>
    <variation>F</variation>
    <location>
        <position position="251"/>
    </location>
</feature>